<proteinExistence type="inferred from homology"/>
<accession>B0JTK0</accession>
<organism>
    <name type="scientific">Microcystis aeruginosa (strain NIES-843 / IAM M-2473)</name>
    <dbReference type="NCBI Taxonomy" id="449447"/>
    <lineage>
        <taxon>Bacteria</taxon>
        <taxon>Bacillati</taxon>
        <taxon>Cyanobacteriota</taxon>
        <taxon>Cyanophyceae</taxon>
        <taxon>Oscillatoriophycideae</taxon>
        <taxon>Chroococcales</taxon>
        <taxon>Microcystaceae</taxon>
        <taxon>Microcystis</taxon>
    </lineage>
</organism>
<keyword id="KW-0472">Membrane</keyword>
<keyword id="KW-0602">Photosynthesis</keyword>
<keyword id="KW-0793">Thylakoid</keyword>
<keyword id="KW-0812">Transmembrane</keyword>
<keyword id="KW-1133">Transmembrane helix</keyword>
<gene>
    <name evidence="1" type="primary">ycf4</name>
    <name type="ordered locus">MAE_44810</name>
</gene>
<comment type="function">
    <text evidence="1">Seems to be required for the assembly of the photosystem I complex.</text>
</comment>
<comment type="subcellular location">
    <subcellularLocation>
        <location evidence="1">Cellular thylakoid membrane</location>
        <topology evidence="1">Multi-pass membrane protein</topology>
    </subcellularLocation>
</comment>
<comment type="similarity">
    <text evidence="1">Belongs to the Ycf4 family.</text>
</comment>
<evidence type="ECO:0000255" key="1">
    <source>
        <dbReference type="HAMAP-Rule" id="MF_00437"/>
    </source>
</evidence>
<name>YCF4_MICAN</name>
<dbReference type="EMBL" id="AP009552">
    <property type="protein sequence ID" value="BAG04303.1"/>
    <property type="molecule type" value="Genomic_DNA"/>
</dbReference>
<dbReference type="RefSeq" id="WP_012267086.1">
    <property type="nucleotide sequence ID" value="NC_010296.1"/>
</dbReference>
<dbReference type="STRING" id="449447.MAE_44810"/>
<dbReference type="PaxDb" id="449447-MAE_44810"/>
<dbReference type="EnsemblBacteria" id="BAG04303">
    <property type="protein sequence ID" value="BAG04303"/>
    <property type="gene ID" value="MAE_44810"/>
</dbReference>
<dbReference type="KEGG" id="mar:MAE_44810"/>
<dbReference type="PATRIC" id="fig|449447.4.peg.4065"/>
<dbReference type="eggNOG" id="ENOG502Z7YX">
    <property type="taxonomic scope" value="Bacteria"/>
</dbReference>
<dbReference type="HOGENOM" id="CLU_095465_0_0_3"/>
<dbReference type="BioCyc" id="MAER449447:MAE_RS19415-MONOMER"/>
<dbReference type="Proteomes" id="UP000001510">
    <property type="component" value="Chromosome"/>
</dbReference>
<dbReference type="GO" id="GO:0009522">
    <property type="term" value="C:photosystem I"/>
    <property type="evidence" value="ECO:0007669"/>
    <property type="project" value="InterPro"/>
</dbReference>
<dbReference type="GO" id="GO:0031676">
    <property type="term" value="C:plasma membrane-derived thylakoid membrane"/>
    <property type="evidence" value="ECO:0007669"/>
    <property type="project" value="UniProtKB-SubCell"/>
</dbReference>
<dbReference type="GO" id="GO:0015979">
    <property type="term" value="P:photosynthesis"/>
    <property type="evidence" value="ECO:0007669"/>
    <property type="project" value="UniProtKB-UniRule"/>
</dbReference>
<dbReference type="HAMAP" id="MF_00437">
    <property type="entry name" value="Ycf4"/>
    <property type="match status" value="1"/>
</dbReference>
<dbReference type="InterPro" id="IPR003359">
    <property type="entry name" value="PSI_Ycf4_assembly"/>
</dbReference>
<dbReference type="NCBIfam" id="NF002712">
    <property type="entry name" value="PRK02542.1"/>
    <property type="match status" value="1"/>
</dbReference>
<dbReference type="PANTHER" id="PTHR33288">
    <property type="match status" value="1"/>
</dbReference>
<dbReference type="PANTHER" id="PTHR33288:SF4">
    <property type="entry name" value="PHOTOSYSTEM I ASSEMBLY PROTEIN YCF4"/>
    <property type="match status" value="1"/>
</dbReference>
<dbReference type="Pfam" id="PF02392">
    <property type="entry name" value="Ycf4"/>
    <property type="match status" value="1"/>
</dbReference>
<reference key="1">
    <citation type="journal article" date="2007" name="DNA Res.">
        <title>Complete genomic structure of the bloom-forming toxic cyanobacterium Microcystis aeruginosa NIES-843.</title>
        <authorList>
            <person name="Kaneko T."/>
            <person name="Nakajima N."/>
            <person name="Okamoto S."/>
            <person name="Suzuki I."/>
            <person name="Tanabe Y."/>
            <person name="Tamaoki M."/>
            <person name="Nakamura Y."/>
            <person name="Kasai F."/>
            <person name="Watanabe A."/>
            <person name="Kawashima K."/>
            <person name="Kishida Y."/>
            <person name="Ono A."/>
            <person name="Shimizu Y."/>
            <person name="Takahashi C."/>
            <person name="Minami C."/>
            <person name="Fujishiro T."/>
            <person name="Kohara M."/>
            <person name="Katoh M."/>
            <person name="Nakazaki N."/>
            <person name="Nakayama S."/>
            <person name="Yamada M."/>
            <person name="Tabata S."/>
            <person name="Watanabe M.M."/>
        </authorList>
    </citation>
    <scope>NUCLEOTIDE SEQUENCE [LARGE SCALE GENOMIC DNA]</scope>
    <source>
        <strain>NIES-843 / IAM M-247</strain>
    </source>
</reference>
<feature type="chain" id="PRO_1000200329" description="Photosystem I assembly protein Ycf4">
    <location>
        <begin position="1"/>
        <end position="188"/>
    </location>
</feature>
<feature type="transmembrane region" description="Helical" evidence="1">
    <location>
        <begin position="26"/>
        <end position="46"/>
    </location>
</feature>
<feature type="transmembrane region" description="Helical" evidence="1">
    <location>
        <begin position="70"/>
        <end position="90"/>
    </location>
</feature>
<protein>
    <recommendedName>
        <fullName evidence="1">Photosystem I assembly protein Ycf4</fullName>
    </recommendedName>
</protein>
<sequence length="188" mass="21095">MKAQTTSKDSLILRQEVVGARRPSNYFWAVIVSIGGLGFLLAGLSSYLKVNLLLVSDTSALQFIPQGVALLFYGTAGTLLAIYLWLSLLWNVGGGYNEFNKETGKVKIFRWGYPGKNRRIDLDWPLEDAQAVRAEVREGLNPKRELFLRIKQRRDIPLTRVGDPMSLSELENQGAELARFLEIPLEGL</sequence>